<dbReference type="EMBL" id="AE017226">
    <property type="protein sequence ID" value="AAS11715.1"/>
    <property type="molecule type" value="Genomic_DNA"/>
</dbReference>
<dbReference type="RefSeq" id="NP_971804.1">
    <property type="nucleotide sequence ID" value="NC_002967.9"/>
</dbReference>
<dbReference type="RefSeq" id="WP_002678680.1">
    <property type="nucleotide sequence ID" value="NC_002967.9"/>
</dbReference>
<dbReference type="SMR" id="Q73NF6"/>
<dbReference type="STRING" id="243275.TDE_1197"/>
<dbReference type="PaxDb" id="243275-TDE_1197"/>
<dbReference type="GeneID" id="2741158"/>
<dbReference type="KEGG" id="tde:TDE_1197"/>
<dbReference type="PATRIC" id="fig|243275.7.peg.1152"/>
<dbReference type="eggNOG" id="COG2001">
    <property type="taxonomic scope" value="Bacteria"/>
</dbReference>
<dbReference type="HOGENOM" id="CLU_107907_0_2_12"/>
<dbReference type="OrthoDB" id="9807753at2"/>
<dbReference type="Proteomes" id="UP000008212">
    <property type="component" value="Chromosome"/>
</dbReference>
<dbReference type="GO" id="GO:0005737">
    <property type="term" value="C:cytoplasm"/>
    <property type="evidence" value="ECO:0007669"/>
    <property type="project" value="UniProtKB-UniRule"/>
</dbReference>
<dbReference type="GO" id="GO:0009295">
    <property type="term" value="C:nucleoid"/>
    <property type="evidence" value="ECO:0007669"/>
    <property type="project" value="UniProtKB-SubCell"/>
</dbReference>
<dbReference type="GO" id="GO:0003700">
    <property type="term" value="F:DNA-binding transcription factor activity"/>
    <property type="evidence" value="ECO:0007669"/>
    <property type="project" value="UniProtKB-UniRule"/>
</dbReference>
<dbReference type="GO" id="GO:0000976">
    <property type="term" value="F:transcription cis-regulatory region binding"/>
    <property type="evidence" value="ECO:0007669"/>
    <property type="project" value="TreeGrafter"/>
</dbReference>
<dbReference type="GO" id="GO:2000143">
    <property type="term" value="P:negative regulation of DNA-templated transcription initiation"/>
    <property type="evidence" value="ECO:0007669"/>
    <property type="project" value="TreeGrafter"/>
</dbReference>
<dbReference type="CDD" id="cd16321">
    <property type="entry name" value="MraZ_C"/>
    <property type="match status" value="1"/>
</dbReference>
<dbReference type="CDD" id="cd16320">
    <property type="entry name" value="MraZ_N"/>
    <property type="match status" value="1"/>
</dbReference>
<dbReference type="Gene3D" id="3.40.1550.20">
    <property type="entry name" value="Transcriptional regulator MraZ domain"/>
    <property type="match status" value="1"/>
</dbReference>
<dbReference type="HAMAP" id="MF_01008">
    <property type="entry name" value="MraZ"/>
    <property type="match status" value="1"/>
</dbReference>
<dbReference type="InterPro" id="IPR003444">
    <property type="entry name" value="MraZ"/>
</dbReference>
<dbReference type="InterPro" id="IPR035644">
    <property type="entry name" value="MraZ_C"/>
</dbReference>
<dbReference type="InterPro" id="IPR020603">
    <property type="entry name" value="MraZ_dom"/>
</dbReference>
<dbReference type="InterPro" id="IPR035642">
    <property type="entry name" value="MraZ_N"/>
</dbReference>
<dbReference type="InterPro" id="IPR038619">
    <property type="entry name" value="MraZ_sf"/>
</dbReference>
<dbReference type="InterPro" id="IPR007159">
    <property type="entry name" value="SpoVT-AbrB_dom"/>
</dbReference>
<dbReference type="InterPro" id="IPR037914">
    <property type="entry name" value="SpoVT-AbrB_sf"/>
</dbReference>
<dbReference type="NCBIfam" id="TIGR00242">
    <property type="entry name" value="division/cell wall cluster transcriptional repressor MraZ"/>
    <property type="match status" value="1"/>
</dbReference>
<dbReference type="PANTHER" id="PTHR34701">
    <property type="entry name" value="TRANSCRIPTIONAL REGULATOR MRAZ"/>
    <property type="match status" value="1"/>
</dbReference>
<dbReference type="PANTHER" id="PTHR34701:SF1">
    <property type="entry name" value="TRANSCRIPTIONAL REGULATOR MRAZ"/>
    <property type="match status" value="1"/>
</dbReference>
<dbReference type="Pfam" id="PF02381">
    <property type="entry name" value="MraZ"/>
    <property type="match status" value="2"/>
</dbReference>
<dbReference type="SUPFAM" id="SSF89447">
    <property type="entry name" value="AbrB/MazE/MraZ-like"/>
    <property type="match status" value="1"/>
</dbReference>
<dbReference type="PROSITE" id="PS51740">
    <property type="entry name" value="SPOVT_ABRB"/>
    <property type="match status" value="2"/>
</dbReference>
<evidence type="ECO:0000255" key="1">
    <source>
        <dbReference type="HAMAP-Rule" id="MF_01008"/>
    </source>
</evidence>
<evidence type="ECO:0000255" key="2">
    <source>
        <dbReference type="PROSITE-ProRule" id="PRU01076"/>
    </source>
</evidence>
<name>MRAZ_TREDE</name>
<sequence length="144" mass="16410">MTGEYKNTLDEKGRIMFPAKIRAELPDSNLVITRGVGNCLWIFTADKWKKFSDEIMKKTSLFKAQSLLVMRRLIAPAQEIEVDKNGRISIPQSLRECAGLEKDCIILGLGKCFELWDLKQYEKYLKESEPDFSEAAEALGEIGF</sequence>
<accession>Q73NF6</accession>
<proteinExistence type="inferred from homology"/>
<keyword id="KW-0963">Cytoplasm</keyword>
<keyword id="KW-0238">DNA-binding</keyword>
<keyword id="KW-1185">Reference proteome</keyword>
<keyword id="KW-0677">Repeat</keyword>
<keyword id="KW-0804">Transcription</keyword>
<keyword id="KW-0805">Transcription regulation</keyword>
<gene>
    <name evidence="1" type="primary">mraZ</name>
    <name type="ordered locus">TDE_1197</name>
</gene>
<organism>
    <name type="scientific">Treponema denticola (strain ATCC 35405 / DSM 14222 / CIP 103919 / JCM 8153 / KCTC 15104)</name>
    <dbReference type="NCBI Taxonomy" id="243275"/>
    <lineage>
        <taxon>Bacteria</taxon>
        <taxon>Pseudomonadati</taxon>
        <taxon>Spirochaetota</taxon>
        <taxon>Spirochaetia</taxon>
        <taxon>Spirochaetales</taxon>
        <taxon>Treponemataceae</taxon>
        <taxon>Treponema</taxon>
    </lineage>
</organism>
<reference key="1">
    <citation type="journal article" date="2004" name="Proc. Natl. Acad. Sci. U.S.A.">
        <title>Comparison of the genome of the oral pathogen Treponema denticola with other spirochete genomes.</title>
        <authorList>
            <person name="Seshadri R."/>
            <person name="Myers G.S.A."/>
            <person name="Tettelin H."/>
            <person name="Eisen J.A."/>
            <person name="Heidelberg J.F."/>
            <person name="Dodson R.J."/>
            <person name="Davidsen T.M."/>
            <person name="DeBoy R.T."/>
            <person name="Fouts D.E."/>
            <person name="Haft D.H."/>
            <person name="Selengut J."/>
            <person name="Ren Q."/>
            <person name="Brinkac L.M."/>
            <person name="Madupu R."/>
            <person name="Kolonay J.F."/>
            <person name="Durkin S.A."/>
            <person name="Daugherty S.C."/>
            <person name="Shetty J."/>
            <person name="Shvartsbeyn A."/>
            <person name="Gebregeorgis E."/>
            <person name="Geer K."/>
            <person name="Tsegaye G."/>
            <person name="Malek J.A."/>
            <person name="Ayodeji B."/>
            <person name="Shatsman S."/>
            <person name="McLeod M.P."/>
            <person name="Smajs D."/>
            <person name="Howell J.K."/>
            <person name="Pal S."/>
            <person name="Amin A."/>
            <person name="Vashisth P."/>
            <person name="McNeill T.Z."/>
            <person name="Xiang Q."/>
            <person name="Sodergren E."/>
            <person name="Baca E."/>
            <person name="Weinstock G.M."/>
            <person name="Norris S.J."/>
            <person name="Fraser C.M."/>
            <person name="Paulsen I.T."/>
        </authorList>
    </citation>
    <scope>NUCLEOTIDE SEQUENCE [LARGE SCALE GENOMIC DNA]</scope>
    <source>
        <strain>ATCC 35405 / DSM 14222 / CIP 103919 / JCM 8153 / KCTC 15104</strain>
    </source>
</reference>
<feature type="chain" id="PRO_0000108551" description="Transcriptional regulator MraZ">
    <location>
        <begin position="1"/>
        <end position="144"/>
    </location>
</feature>
<feature type="domain" description="SpoVT-AbrB 1" evidence="2">
    <location>
        <begin position="4"/>
        <end position="47"/>
    </location>
</feature>
<feature type="domain" description="SpoVT-AbrB 2" evidence="2">
    <location>
        <begin position="77"/>
        <end position="120"/>
    </location>
</feature>
<protein>
    <recommendedName>
        <fullName>Transcriptional regulator MraZ</fullName>
    </recommendedName>
</protein>
<comment type="subunit">
    <text evidence="1">Forms oligomers.</text>
</comment>
<comment type="subcellular location">
    <subcellularLocation>
        <location evidence="1">Cytoplasm</location>
        <location evidence="1">Nucleoid</location>
    </subcellularLocation>
</comment>
<comment type="similarity">
    <text evidence="1">Belongs to the MraZ family.</text>
</comment>